<dbReference type="EC" id="6.3.4.20" evidence="1"/>
<dbReference type="EMBL" id="CP000103">
    <property type="protein sequence ID" value="ABB75997.1"/>
    <property type="molecule type" value="Genomic_DNA"/>
</dbReference>
<dbReference type="RefSeq" id="WP_011381989.1">
    <property type="nucleotide sequence ID" value="NC_007614.1"/>
</dbReference>
<dbReference type="SMR" id="Q2Y5H4"/>
<dbReference type="STRING" id="323848.Nmul_A2710"/>
<dbReference type="KEGG" id="nmu:Nmul_A2710"/>
<dbReference type="eggNOG" id="COG0603">
    <property type="taxonomic scope" value="Bacteria"/>
</dbReference>
<dbReference type="HOGENOM" id="CLU_081854_1_1_4"/>
<dbReference type="OrthoDB" id="9789567at2"/>
<dbReference type="UniPathway" id="UPA00391"/>
<dbReference type="Proteomes" id="UP000002718">
    <property type="component" value="Chromosome"/>
</dbReference>
<dbReference type="GO" id="GO:0005524">
    <property type="term" value="F:ATP binding"/>
    <property type="evidence" value="ECO:0007669"/>
    <property type="project" value="UniProtKB-UniRule"/>
</dbReference>
<dbReference type="GO" id="GO:0016879">
    <property type="term" value="F:ligase activity, forming carbon-nitrogen bonds"/>
    <property type="evidence" value="ECO:0007669"/>
    <property type="project" value="UniProtKB-UniRule"/>
</dbReference>
<dbReference type="GO" id="GO:0008270">
    <property type="term" value="F:zinc ion binding"/>
    <property type="evidence" value="ECO:0007669"/>
    <property type="project" value="UniProtKB-UniRule"/>
</dbReference>
<dbReference type="GO" id="GO:0008616">
    <property type="term" value="P:queuosine biosynthetic process"/>
    <property type="evidence" value="ECO:0007669"/>
    <property type="project" value="UniProtKB-UniRule"/>
</dbReference>
<dbReference type="CDD" id="cd01995">
    <property type="entry name" value="QueC-like"/>
    <property type="match status" value="1"/>
</dbReference>
<dbReference type="Gene3D" id="3.40.50.620">
    <property type="entry name" value="HUPs"/>
    <property type="match status" value="1"/>
</dbReference>
<dbReference type="HAMAP" id="MF_01633">
    <property type="entry name" value="QueC"/>
    <property type="match status" value="1"/>
</dbReference>
<dbReference type="InterPro" id="IPR018317">
    <property type="entry name" value="QueC"/>
</dbReference>
<dbReference type="InterPro" id="IPR014729">
    <property type="entry name" value="Rossmann-like_a/b/a_fold"/>
</dbReference>
<dbReference type="NCBIfam" id="TIGR00364">
    <property type="entry name" value="7-cyano-7-deazaguanine synthase QueC"/>
    <property type="match status" value="1"/>
</dbReference>
<dbReference type="PANTHER" id="PTHR42914">
    <property type="entry name" value="7-CYANO-7-DEAZAGUANINE SYNTHASE"/>
    <property type="match status" value="1"/>
</dbReference>
<dbReference type="PANTHER" id="PTHR42914:SF1">
    <property type="entry name" value="7-CYANO-7-DEAZAGUANINE SYNTHASE"/>
    <property type="match status" value="1"/>
</dbReference>
<dbReference type="Pfam" id="PF06508">
    <property type="entry name" value="QueC"/>
    <property type="match status" value="1"/>
</dbReference>
<dbReference type="PIRSF" id="PIRSF006293">
    <property type="entry name" value="ExsB"/>
    <property type="match status" value="1"/>
</dbReference>
<dbReference type="SUPFAM" id="SSF52402">
    <property type="entry name" value="Adenine nucleotide alpha hydrolases-like"/>
    <property type="match status" value="1"/>
</dbReference>
<accession>Q2Y5H4</accession>
<keyword id="KW-0067">ATP-binding</keyword>
<keyword id="KW-0436">Ligase</keyword>
<keyword id="KW-0479">Metal-binding</keyword>
<keyword id="KW-0547">Nucleotide-binding</keyword>
<keyword id="KW-0671">Queuosine biosynthesis</keyword>
<keyword id="KW-1185">Reference proteome</keyword>
<keyword id="KW-0862">Zinc</keyword>
<protein>
    <recommendedName>
        <fullName evidence="1">7-cyano-7-deazaguanine synthase</fullName>
        <ecNumber evidence="1">6.3.4.20</ecNumber>
    </recommendedName>
    <alternativeName>
        <fullName evidence="1">7-cyano-7-carbaguanine synthase</fullName>
    </alternativeName>
    <alternativeName>
        <fullName evidence="1">PreQ(0) synthase</fullName>
    </alternativeName>
    <alternativeName>
        <fullName evidence="1">Queuosine biosynthesis protein QueC</fullName>
    </alternativeName>
</protein>
<comment type="function">
    <text evidence="1">Catalyzes the ATP-dependent conversion of 7-carboxy-7-deazaguanine (CDG) to 7-cyano-7-deazaguanine (preQ(0)).</text>
</comment>
<comment type="catalytic activity">
    <reaction evidence="1">
        <text>7-carboxy-7-deazaguanine + NH4(+) + ATP = 7-cyano-7-deazaguanine + ADP + phosphate + H2O + H(+)</text>
        <dbReference type="Rhea" id="RHEA:27982"/>
        <dbReference type="ChEBI" id="CHEBI:15377"/>
        <dbReference type="ChEBI" id="CHEBI:15378"/>
        <dbReference type="ChEBI" id="CHEBI:28938"/>
        <dbReference type="ChEBI" id="CHEBI:30616"/>
        <dbReference type="ChEBI" id="CHEBI:43474"/>
        <dbReference type="ChEBI" id="CHEBI:45075"/>
        <dbReference type="ChEBI" id="CHEBI:61036"/>
        <dbReference type="ChEBI" id="CHEBI:456216"/>
        <dbReference type="EC" id="6.3.4.20"/>
    </reaction>
</comment>
<comment type="cofactor">
    <cofactor evidence="1">
        <name>Zn(2+)</name>
        <dbReference type="ChEBI" id="CHEBI:29105"/>
    </cofactor>
    <text evidence="1">Binds 1 zinc ion per subunit.</text>
</comment>
<comment type="pathway">
    <text evidence="1">Purine metabolism; 7-cyano-7-deazaguanine biosynthesis.</text>
</comment>
<comment type="similarity">
    <text evidence="1">Belongs to the QueC family.</text>
</comment>
<sequence>MVKAVVLLSGGLDSATVLAIARQQGYECYALSVSYGQRHGAELAAAKNLARSLGATAHKIIQVDLSTFGGSALIDKEREIPTDGVTPGIPSTYVPARNTIMLSIALAWAEVLGSGDIFIGVNAIDYSGYPDCRPEYIEAFETMANVATKAGIEGTRLAIHAPLMNLSKAEIIKRGGVLGVDYSMTVSCYQADDAGLACGVCDSCRLRRAGFESADVPDVTRYHAGFRQTPAS</sequence>
<proteinExistence type="inferred from homology"/>
<feature type="chain" id="PRO_0000246869" description="7-cyano-7-deazaguanine synthase">
    <location>
        <begin position="1"/>
        <end position="232"/>
    </location>
</feature>
<feature type="binding site" evidence="1">
    <location>
        <begin position="8"/>
        <end position="18"/>
    </location>
    <ligand>
        <name>ATP</name>
        <dbReference type="ChEBI" id="CHEBI:30616"/>
    </ligand>
</feature>
<feature type="binding site" evidence="1">
    <location>
        <position position="188"/>
    </location>
    <ligand>
        <name>Zn(2+)</name>
        <dbReference type="ChEBI" id="CHEBI:29105"/>
    </ligand>
</feature>
<feature type="binding site" evidence="1">
    <location>
        <position position="198"/>
    </location>
    <ligand>
        <name>Zn(2+)</name>
        <dbReference type="ChEBI" id="CHEBI:29105"/>
    </ligand>
</feature>
<feature type="binding site" evidence="1">
    <location>
        <position position="201"/>
    </location>
    <ligand>
        <name>Zn(2+)</name>
        <dbReference type="ChEBI" id="CHEBI:29105"/>
    </ligand>
</feature>
<feature type="binding site" evidence="1">
    <location>
        <position position="204"/>
    </location>
    <ligand>
        <name>Zn(2+)</name>
        <dbReference type="ChEBI" id="CHEBI:29105"/>
    </ligand>
</feature>
<organism>
    <name type="scientific">Nitrosospira multiformis (strain ATCC 25196 / NCIMB 11849 / C 71)</name>
    <dbReference type="NCBI Taxonomy" id="323848"/>
    <lineage>
        <taxon>Bacteria</taxon>
        <taxon>Pseudomonadati</taxon>
        <taxon>Pseudomonadota</taxon>
        <taxon>Betaproteobacteria</taxon>
        <taxon>Nitrosomonadales</taxon>
        <taxon>Nitrosomonadaceae</taxon>
        <taxon>Nitrosospira</taxon>
    </lineage>
</organism>
<evidence type="ECO:0000255" key="1">
    <source>
        <dbReference type="HAMAP-Rule" id="MF_01633"/>
    </source>
</evidence>
<gene>
    <name evidence="1" type="primary">queC</name>
    <name type="ordered locus">Nmul_A2710</name>
</gene>
<reference key="1">
    <citation type="submission" date="2005-08" db="EMBL/GenBank/DDBJ databases">
        <title>Complete sequence of chromosome 1 of Nitrosospira multiformis ATCC 25196.</title>
        <authorList>
            <person name="Copeland A."/>
            <person name="Lucas S."/>
            <person name="Lapidus A."/>
            <person name="Barry K."/>
            <person name="Detter J.C."/>
            <person name="Glavina T."/>
            <person name="Hammon N."/>
            <person name="Israni S."/>
            <person name="Pitluck S."/>
            <person name="Chain P."/>
            <person name="Malfatti S."/>
            <person name="Shin M."/>
            <person name="Vergez L."/>
            <person name="Schmutz J."/>
            <person name="Larimer F."/>
            <person name="Land M."/>
            <person name="Hauser L."/>
            <person name="Kyrpides N."/>
            <person name="Lykidis A."/>
            <person name="Richardson P."/>
        </authorList>
    </citation>
    <scope>NUCLEOTIDE SEQUENCE [LARGE SCALE GENOMIC DNA]</scope>
    <source>
        <strain>ATCC 25196 / NCIMB 11849 / C 71</strain>
    </source>
</reference>
<name>QUEC_NITMU</name>